<reference key="1">
    <citation type="journal article" date="1998" name="Science">
        <title>Genome sequence of an obligate intracellular pathogen of humans: Chlamydia trachomatis.</title>
        <authorList>
            <person name="Stephens R.S."/>
            <person name="Kalman S."/>
            <person name="Lammel C.J."/>
            <person name="Fan J."/>
            <person name="Marathe R."/>
            <person name="Aravind L."/>
            <person name="Mitchell W.P."/>
            <person name="Olinger L."/>
            <person name="Tatusov R.L."/>
            <person name="Zhao Q."/>
            <person name="Koonin E.V."/>
            <person name="Davis R.W."/>
        </authorList>
    </citation>
    <scope>NUCLEOTIDE SEQUENCE [LARGE SCALE GENOMIC DNA]</scope>
    <source>
        <strain>ATCC VR-885 / DSM 19411 / UW-3/Cx</strain>
    </source>
</reference>
<protein>
    <recommendedName>
        <fullName evidence="1">Phosphoenolpyruvate carboxykinase [GTP]</fullName>
        <shortName evidence="1">PEP carboxykinase</shortName>
        <shortName evidence="1">PEPCK</shortName>
        <ecNumber evidence="1">4.1.1.32</ecNumber>
    </recommendedName>
</protein>
<keyword id="KW-0963">Cytoplasm</keyword>
<keyword id="KW-0210">Decarboxylase</keyword>
<keyword id="KW-0312">Gluconeogenesis</keyword>
<keyword id="KW-0342">GTP-binding</keyword>
<keyword id="KW-0456">Lyase</keyword>
<keyword id="KW-0464">Manganese</keyword>
<keyword id="KW-0479">Metal-binding</keyword>
<keyword id="KW-0547">Nucleotide-binding</keyword>
<keyword id="KW-1185">Reference proteome</keyword>
<sequence>MTGDWISKITHSGLKSWIEEVIALVSPDDVRLCDGSEAEYQQLCQQMQDAGVMTPLNPELHPNCFLVRSSPSDVARAEQFTFICTKTQEEAGPTNNWRDPQEMRAELHALFRECMRGRTLYIVPFCMGPLNSPFSLIGVEITDSPYVVCSMKIMTRMGASVLAMLGSNGTFYKCLHSVGKPLAPGEKDVAWPCDPEHMRIVHFQDDSSVMSFGSGYGGNALLGKKCVALRLASYLGHQQGWLAEHMLIIGVTNPEGRKKYFAAAFPSACGKTNLAMLMPKLPGWKVECIGDDIAWIRPGNDGRLYAVNPEFGFFGVALGTSETTNPHALATCYADSLFTNVALTADGDVWWEGKTTTPPQGMIDWKGRTWVSGGEPAAHPNARFTAPLDHCPSLDPQWNNPQGVPLEAVIFGGRRTETIPLVYEALSWEHGVMMGAGMSSTTTAAIVGELGKLRHDPFAMLPFCGYNMAAYFEHWLSFATKGLQLPRIFGVNWFRKDEHGQFIWPGFSENLRVLEWIFRRTDGEDAIAHRTPVGYLPTAEGLNTSGLDLSEDALRALLTVDAQGWKAEVSNIRKYCSIFGADMPQRILEELSRIESELK</sequence>
<evidence type="ECO:0000255" key="1">
    <source>
        <dbReference type="HAMAP-Rule" id="MF_00452"/>
    </source>
</evidence>
<feature type="chain" id="PRO_0000103600" description="Phosphoenolpyruvate carboxykinase [GTP]">
    <location>
        <begin position="1"/>
        <end position="599"/>
    </location>
</feature>
<feature type="active site" evidence="1">
    <location>
        <position position="269"/>
    </location>
</feature>
<feature type="binding site" evidence="1">
    <location>
        <position position="76"/>
    </location>
    <ligand>
        <name>substrate</name>
    </ligand>
</feature>
<feature type="binding site" evidence="1">
    <location>
        <begin position="216"/>
        <end position="218"/>
    </location>
    <ligand>
        <name>substrate</name>
    </ligand>
</feature>
<feature type="binding site" evidence="1">
    <location>
        <position position="225"/>
    </location>
    <ligand>
        <name>Mn(2+)</name>
        <dbReference type="ChEBI" id="CHEBI:29035"/>
    </ligand>
</feature>
<feature type="binding site" evidence="1">
    <location>
        <position position="245"/>
    </location>
    <ligand>
        <name>Mn(2+)</name>
        <dbReference type="ChEBI" id="CHEBI:29035"/>
    </ligand>
</feature>
<feature type="binding site" evidence="1">
    <location>
        <position position="267"/>
    </location>
    <ligand>
        <name>substrate</name>
    </ligand>
</feature>
<feature type="binding site" evidence="1">
    <location>
        <begin position="268"/>
        <end position="273"/>
    </location>
    <ligand>
        <name>GTP</name>
        <dbReference type="ChEBI" id="CHEBI:37565"/>
    </ligand>
</feature>
<feature type="binding site" evidence="1">
    <location>
        <position position="292"/>
    </location>
    <ligand>
        <name>Mn(2+)</name>
        <dbReference type="ChEBI" id="CHEBI:29035"/>
    </ligand>
</feature>
<feature type="binding site" evidence="1">
    <location>
        <begin position="381"/>
        <end position="383"/>
    </location>
    <ligand>
        <name>substrate</name>
    </ligand>
</feature>
<feature type="binding site" evidence="1">
    <location>
        <position position="383"/>
    </location>
    <ligand>
        <name>GTP</name>
        <dbReference type="ChEBI" id="CHEBI:37565"/>
    </ligand>
</feature>
<feature type="binding site" evidence="1">
    <location>
        <position position="414"/>
    </location>
    <ligand>
        <name>GTP</name>
        <dbReference type="ChEBI" id="CHEBI:37565"/>
    </ligand>
</feature>
<feature type="binding site" evidence="1">
    <location>
        <begin position="507"/>
        <end position="510"/>
    </location>
    <ligand>
        <name>GTP</name>
        <dbReference type="ChEBI" id="CHEBI:37565"/>
    </ligand>
</feature>
<proteinExistence type="inferred from homology"/>
<comment type="function">
    <text evidence="1">Catalyzes the conversion of oxaloacetate (OAA) to phosphoenolpyruvate (PEP), the rate-limiting step in the metabolic pathway that produces glucose from lactate and other precursors derived from the citric acid cycle.</text>
</comment>
<comment type="catalytic activity">
    <reaction evidence="1">
        <text>oxaloacetate + GTP = phosphoenolpyruvate + GDP + CO2</text>
        <dbReference type="Rhea" id="RHEA:10388"/>
        <dbReference type="ChEBI" id="CHEBI:16452"/>
        <dbReference type="ChEBI" id="CHEBI:16526"/>
        <dbReference type="ChEBI" id="CHEBI:37565"/>
        <dbReference type="ChEBI" id="CHEBI:58189"/>
        <dbReference type="ChEBI" id="CHEBI:58702"/>
        <dbReference type="EC" id="4.1.1.32"/>
    </reaction>
</comment>
<comment type="cofactor">
    <cofactor evidence="1">
        <name>Mn(2+)</name>
        <dbReference type="ChEBI" id="CHEBI:29035"/>
    </cofactor>
    <text evidence="1">Binds 1 Mn(2+) ion per subunit.</text>
</comment>
<comment type="pathway">
    <text evidence="1">Carbohydrate biosynthesis; gluconeogenesis.</text>
</comment>
<comment type="subunit">
    <text evidence="1">Monomer.</text>
</comment>
<comment type="subcellular location">
    <subcellularLocation>
        <location evidence="1">Cytoplasm</location>
    </subcellularLocation>
</comment>
<comment type="similarity">
    <text evidence="1">Belongs to the phosphoenolpyruvate carboxykinase [GTP] family.</text>
</comment>
<organism>
    <name type="scientific">Chlamydia trachomatis serovar D (strain ATCC VR-885 / DSM 19411 / UW-3/Cx)</name>
    <dbReference type="NCBI Taxonomy" id="272561"/>
    <lineage>
        <taxon>Bacteria</taxon>
        <taxon>Pseudomonadati</taxon>
        <taxon>Chlamydiota</taxon>
        <taxon>Chlamydiia</taxon>
        <taxon>Chlamydiales</taxon>
        <taxon>Chlamydiaceae</taxon>
        <taxon>Chlamydia/Chlamydophila group</taxon>
        <taxon>Chlamydia</taxon>
    </lineage>
</organism>
<name>PCKG_CHLTR</name>
<gene>
    <name evidence="1" type="primary">pckG</name>
    <name type="ordered locus">CT_710</name>
</gene>
<accession>O84716</accession>
<dbReference type="EC" id="4.1.1.32" evidence="1"/>
<dbReference type="EMBL" id="AE001273">
    <property type="protein sequence ID" value="AAC68305.1"/>
    <property type="molecule type" value="Genomic_DNA"/>
</dbReference>
<dbReference type="PIR" id="G71481">
    <property type="entry name" value="G71481"/>
</dbReference>
<dbReference type="RefSeq" id="WP_009872086.1">
    <property type="nucleotide sequence ID" value="NC_000117.1"/>
</dbReference>
<dbReference type="SMR" id="O84716"/>
<dbReference type="STRING" id="272561.CT_710"/>
<dbReference type="EnsemblBacteria" id="AAC68305">
    <property type="protein sequence ID" value="AAC68305"/>
    <property type="gene ID" value="CT_710"/>
</dbReference>
<dbReference type="KEGG" id="ctr:CT_710"/>
<dbReference type="PATRIC" id="fig|272561.5.peg.782"/>
<dbReference type="HOGENOM" id="CLU_028872_1_1_0"/>
<dbReference type="InParanoid" id="O84716"/>
<dbReference type="OrthoDB" id="9758871at2"/>
<dbReference type="UniPathway" id="UPA00138"/>
<dbReference type="Proteomes" id="UP000000431">
    <property type="component" value="Chromosome"/>
</dbReference>
<dbReference type="GO" id="GO:0005829">
    <property type="term" value="C:cytosol"/>
    <property type="evidence" value="ECO:0000318"/>
    <property type="project" value="GO_Central"/>
</dbReference>
<dbReference type="GO" id="GO:0005525">
    <property type="term" value="F:GTP binding"/>
    <property type="evidence" value="ECO:0007669"/>
    <property type="project" value="UniProtKB-UniRule"/>
</dbReference>
<dbReference type="GO" id="GO:0030145">
    <property type="term" value="F:manganese ion binding"/>
    <property type="evidence" value="ECO:0000318"/>
    <property type="project" value="GO_Central"/>
</dbReference>
<dbReference type="GO" id="GO:0004613">
    <property type="term" value="F:phosphoenolpyruvate carboxykinase (GTP) activity"/>
    <property type="evidence" value="ECO:0000318"/>
    <property type="project" value="GO_Central"/>
</dbReference>
<dbReference type="GO" id="GO:0071333">
    <property type="term" value="P:cellular response to glucose stimulus"/>
    <property type="evidence" value="ECO:0000318"/>
    <property type="project" value="GO_Central"/>
</dbReference>
<dbReference type="GO" id="GO:0006094">
    <property type="term" value="P:gluconeogenesis"/>
    <property type="evidence" value="ECO:0000318"/>
    <property type="project" value="GO_Central"/>
</dbReference>
<dbReference type="GO" id="GO:0046327">
    <property type="term" value="P:glycerol biosynthetic process from pyruvate"/>
    <property type="evidence" value="ECO:0000318"/>
    <property type="project" value="GO_Central"/>
</dbReference>
<dbReference type="GO" id="GO:0006107">
    <property type="term" value="P:oxaloacetate metabolic process"/>
    <property type="evidence" value="ECO:0000318"/>
    <property type="project" value="GO_Central"/>
</dbReference>
<dbReference type="GO" id="GO:0019543">
    <property type="term" value="P:propionate catabolic process"/>
    <property type="evidence" value="ECO:0000318"/>
    <property type="project" value="GO_Central"/>
</dbReference>
<dbReference type="GO" id="GO:0033993">
    <property type="term" value="P:response to lipid"/>
    <property type="evidence" value="ECO:0000318"/>
    <property type="project" value="GO_Central"/>
</dbReference>
<dbReference type="GO" id="GO:0042594">
    <property type="term" value="P:response to starvation"/>
    <property type="evidence" value="ECO:0000318"/>
    <property type="project" value="GO_Central"/>
</dbReference>
<dbReference type="CDD" id="cd00819">
    <property type="entry name" value="PEPCK_GTP"/>
    <property type="match status" value="1"/>
</dbReference>
<dbReference type="FunFam" id="3.40.449.10:FF:000003">
    <property type="entry name" value="Phosphoenolpyruvate carboxykinase, cytosolic [GTP]"/>
    <property type="match status" value="1"/>
</dbReference>
<dbReference type="Gene3D" id="3.90.228.20">
    <property type="match status" value="1"/>
</dbReference>
<dbReference type="Gene3D" id="3.40.449.10">
    <property type="entry name" value="Phosphoenolpyruvate Carboxykinase, domain 1"/>
    <property type="match status" value="1"/>
</dbReference>
<dbReference type="Gene3D" id="2.170.8.10">
    <property type="entry name" value="Phosphoenolpyruvate Carboxykinase, domain 2"/>
    <property type="match status" value="1"/>
</dbReference>
<dbReference type="HAMAP" id="MF_00452">
    <property type="entry name" value="PEPCK_GTP"/>
    <property type="match status" value="1"/>
</dbReference>
<dbReference type="InterPro" id="IPR018091">
    <property type="entry name" value="PEP_carboxykin_GTP_CS"/>
</dbReference>
<dbReference type="InterPro" id="IPR013035">
    <property type="entry name" value="PEP_carboxykinase_C"/>
</dbReference>
<dbReference type="InterPro" id="IPR008209">
    <property type="entry name" value="PEP_carboxykinase_GTP"/>
</dbReference>
<dbReference type="InterPro" id="IPR035077">
    <property type="entry name" value="PEP_carboxykinase_GTP_C"/>
</dbReference>
<dbReference type="InterPro" id="IPR035078">
    <property type="entry name" value="PEP_carboxykinase_GTP_N"/>
</dbReference>
<dbReference type="InterPro" id="IPR008210">
    <property type="entry name" value="PEP_carboxykinase_N"/>
</dbReference>
<dbReference type="NCBIfam" id="NF003253">
    <property type="entry name" value="PRK04210.1"/>
    <property type="match status" value="1"/>
</dbReference>
<dbReference type="PANTHER" id="PTHR11561">
    <property type="entry name" value="PHOSPHOENOLPYRUVATE CARBOXYKINASE"/>
    <property type="match status" value="1"/>
</dbReference>
<dbReference type="PANTHER" id="PTHR11561:SF0">
    <property type="entry name" value="PHOSPHOENOLPYRUVATE CARBOXYKINASE [GTP]-RELATED"/>
    <property type="match status" value="1"/>
</dbReference>
<dbReference type="Pfam" id="PF00821">
    <property type="entry name" value="PEPCK_GTP"/>
    <property type="match status" value="1"/>
</dbReference>
<dbReference type="Pfam" id="PF17297">
    <property type="entry name" value="PEPCK_N"/>
    <property type="match status" value="1"/>
</dbReference>
<dbReference type="PIRSF" id="PIRSF001348">
    <property type="entry name" value="PEP_carboxykinase_GTP"/>
    <property type="match status" value="1"/>
</dbReference>
<dbReference type="SUPFAM" id="SSF68923">
    <property type="entry name" value="PEP carboxykinase N-terminal domain"/>
    <property type="match status" value="1"/>
</dbReference>
<dbReference type="SUPFAM" id="SSF53795">
    <property type="entry name" value="PEP carboxykinase-like"/>
    <property type="match status" value="1"/>
</dbReference>
<dbReference type="PROSITE" id="PS00505">
    <property type="entry name" value="PEPCK_GTP"/>
    <property type="match status" value="1"/>
</dbReference>